<sequence length="139" mass="15689">MKPAARRRARECAVQALYSWQLSQNDIADVEYQFLAEQDVKDVDVLYFRELLAGVATNTAYLDGLMKPYLSRLLEELGQVEKAVLRIALYELSKRSDVPYKVAINEAIELAKSFGAEDSHKFVNGVLDKAAPVIRPNKK</sequence>
<feature type="chain" id="PRO_0000176538" description="Transcription antitermination protein NusB">
    <location>
        <begin position="1"/>
        <end position="139"/>
    </location>
</feature>
<accession>P0A781</accession>
<accession>P04381</accession>
<gene>
    <name evidence="1" type="primary">nusB</name>
    <name type="ordered locus">c0527</name>
</gene>
<reference key="1">
    <citation type="journal article" date="2002" name="Proc. Natl. Acad. Sci. U.S.A.">
        <title>Extensive mosaic structure revealed by the complete genome sequence of uropathogenic Escherichia coli.</title>
        <authorList>
            <person name="Welch R.A."/>
            <person name="Burland V."/>
            <person name="Plunkett G. III"/>
            <person name="Redford P."/>
            <person name="Roesch P."/>
            <person name="Rasko D."/>
            <person name="Buckles E.L."/>
            <person name="Liou S.-R."/>
            <person name="Boutin A."/>
            <person name="Hackett J."/>
            <person name="Stroud D."/>
            <person name="Mayhew G.F."/>
            <person name="Rose D.J."/>
            <person name="Zhou S."/>
            <person name="Schwartz D.C."/>
            <person name="Perna N.T."/>
            <person name="Mobley H.L.T."/>
            <person name="Donnenberg M.S."/>
            <person name="Blattner F.R."/>
        </authorList>
    </citation>
    <scope>NUCLEOTIDE SEQUENCE [LARGE SCALE GENOMIC DNA]</scope>
    <source>
        <strain>CFT073 / ATCC 700928 / UPEC</strain>
    </source>
</reference>
<organism>
    <name type="scientific">Escherichia coli O6:H1 (strain CFT073 / ATCC 700928 / UPEC)</name>
    <dbReference type="NCBI Taxonomy" id="199310"/>
    <lineage>
        <taxon>Bacteria</taxon>
        <taxon>Pseudomonadati</taxon>
        <taxon>Pseudomonadota</taxon>
        <taxon>Gammaproteobacteria</taxon>
        <taxon>Enterobacterales</taxon>
        <taxon>Enterobacteriaceae</taxon>
        <taxon>Escherichia</taxon>
    </lineage>
</organism>
<dbReference type="EMBL" id="AE014075">
    <property type="protein sequence ID" value="AAN79005.1"/>
    <property type="molecule type" value="Genomic_DNA"/>
</dbReference>
<dbReference type="RefSeq" id="WP_000801125.1">
    <property type="nucleotide sequence ID" value="NZ_CP051263.1"/>
</dbReference>
<dbReference type="SMR" id="P0A781"/>
<dbReference type="STRING" id="199310.c0527"/>
<dbReference type="GeneID" id="93777044"/>
<dbReference type="KEGG" id="ecc:c0527"/>
<dbReference type="eggNOG" id="COG0781">
    <property type="taxonomic scope" value="Bacteria"/>
</dbReference>
<dbReference type="HOGENOM" id="CLU_087843_4_1_6"/>
<dbReference type="BioCyc" id="ECOL199310:C0527-MONOMER"/>
<dbReference type="Proteomes" id="UP000001410">
    <property type="component" value="Chromosome"/>
</dbReference>
<dbReference type="GO" id="GO:0005829">
    <property type="term" value="C:cytosol"/>
    <property type="evidence" value="ECO:0007669"/>
    <property type="project" value="TreeGrafter"/>
</dbReference>
<dbReference type="GO" id="GO:0003723">
    <property type="term" value="F:RNA binding"/>
    <property type="evidence" value="ECO:0007669"/>
    <property type="project" value="UniProtKB-UniRule"/>
</dbReference>
<dbReference type="GO" id="GO:0006353">
    <property type="term" value="P:DNA-templated transcription termination"/>
    <property type="evidence" value="ECO:0007669"/>
    <property type="project" value="UniProtKB-UniRule"/>
</dbReference>
<dbReference type="GO" id="GO:0031564">
    <property type="term" value="P:transcription antitermination"/>
    <property type="evidence" value="ECO:0007669"/>
    <property type="project" value="UniProtKB-KW"/>
</dbReference>
<dbReference type="CDD" id="cd00619">
    <property type="entry name" value="Terminator_NusB"/>
    <property type="match status" value="1"/>
</dbReference>
<dbReference type="FunFam" id="1.10.940.10:FF:000001">
    <property type="entry name" value="Transcription antitermination factor NusB"/>
    <property type="match status" value="1"/>
</dbReference>
<dbReference type="Gene3D" id="1.10.940.10">
    <property type="entry name" value="NusB-like"/>
    <property type="match status" value="1"/>
</dbReference>
<dbReference type="HAMAP" id="MF_00073">
    <property type="entry name" value="NusB"/>
    <property type="match status" value="1"/>
</dbReference>
<dbReference type="InterPro" id="IPR035926">
    <property type="entry name" value="NusB-like_sf"/>
</dbReference>
<dbReference type="InterPro" id="IPR011605">
    <property type="entry name" value="NusB_fam"/>
</dbReference>
<dbReference type="InterPro" id="IPR006027">
    <property type="entry name" value="NusB_RsmB_TIM44"/>
</dbReference>
<dbReference type="NCBIfam" id="TIGR01951">
    <property type="entry name" value="nusB"/>
    <property type="match status" value="1"/>
</dbReference>
<dbReference type="PANTHER" id="PTHR11078:SF3">
    <property type="entry name" value="ANTITERMINATION NUSB DOMAIN-CONTAINING PROTEIN"/>
    <property type="match status" value="1"/>
</dbReference>
<dbReference type="PANTHER" id="PTHR11078">
    <property type="entry name" value="N UTILIZATION SUBSTANCE PROTEIN B-RELATED"/>
    <property type="match status" value="1"/>
</dbReference>
<dbReference type="Pfam" id="PF01029">
    <property type="entry name" value="NusB"/>
    <property type="match status" value="1"/>
</dbReference>
<dbReference type="SUPFAM" id="SSF48013">
    <property type="entry name" value="NusB-like"/>
    <property type="match status" value="1"/>
</dbReference>
<keyword id="KW-1185">Reference proteome</keyword>
<keyword id="KW-0694">RNA-binding</keyword>
<keyword id="KW-0804">Transcription</keyword>
<keyword id="KW-0889">Transcription antitermination</keyword>
<keyword id="KW-0805">Transcription regulation</keyword>
<comment type="function">
    <text evidence="1">Involved in transcription antitermination. Required for transcription of ribosomal RNA (rRNA) genes. Binds specifically to the boxA antiterminator sequence of the ribosomal RNA (rrn) operons.</text>
</comment>
<comment type="similarity">
    <text evidence="1 2">Belongs to the NusB family.</text>
</comment>
<protein>
    <recommendedName>
        <fullName evidence="1">Transcription antitermination protein NusB</fullName>
    </recommendedName>
    <alternativeName>
        <fullName evidence="1">Antitermination factor NusB</fullName>
    </alternativeName>
</protein>
<proteinExistence type="inferred from homology"/>
<evidence type="ECO:0000255" key="1">
    <source>
        <dbReference type="HAMAP-Rule" id="MF_00073"/>
    </source>
</evidence>
<evidence type="ECO:0000305" key="2"/>
<name>NUSB_ECOL6</name>